<sequence>MDLGTTKYIIYTELIADGYVEKHDVIGAIFGQTEGLLSNELDLRDLQKSGRIGRIDVDLENINGKSFAKITLPSSLDKVETSILAATLETIDRVGPCFATVKITEVEDIRVSKRQYITNRARSILRKLMDEMIDTYEITEEIKESLRTEEIMEFGPENLPCGPNVVHSDSIIVVEGRADVLTLLRCGIKNTVAVEGTSVPKSIMELTKKKTTTAFTDGDRGGELILKELLQTCDIDYVARAPYGKEVEGTSKKEIMKCLRAKVPVEQIVGNNCNNSCNVSEVINSNSPEEIVESVTPKYFEKVETPVTEPVFDDNVVEEETVIVEPVKKTETEIIDVDAANESQVDKKFSGVKEIVDSIKNTGNVKFVVDGTEKTNTFKEFLTNIHEIKKMDFFAADMPISQKIVDLLYDKTPIIVGKEINVTKKPVNLRLFSFDEIVA</sequence>
<organism>
    <name type="scientific">Methanococcus maripaludis (strain C7 / ATCC BAA-1331)</name>
    <dbReference type="NCBI Taxonomy" id="426368"/>
    <lineage>
        <taxon>Archaea</taxon>
        <taxon>Methanobacteriati</taxon>
        <taxon>Methanobacteriota</taxon>
        <taxon>Methanomada group</taxon>
        <taxon>Methanococci</taxon>
        <taxon>Methanococcales</taxon>
        <taxon>Methanococcaceae</taxon>
        <taxon>Methanococcus</taxon>
    </lineage>
</organism>
<name>DNAG_METM7</name>
<evidence type="ECO:0000255" key="1">
    <source>
        <dbReference type="HAMAP-Rule" id="MF_00007"/>
    </source>
</evidence>
<feature type="chain" id="PRO_1000000560" description="DNA primase DnaG">
    <location>
        <begin position="1"/>
        <end position="439"/>
    </location>
</feature>
<feature type="domain" description="Toprim" evidence="1">
    <location>
        <begin position="169"/>
        <end position="243"/>
    </location>
</feature>
<feature type="binding site" evidence="1">
    <location>
        <position position="175"/>
    </location>
    <ligand>
        <name>Mg(2+)</name>
        <dbReference type="ChEBI" id="CHEBI:18420"/>
        <label>1</label>
        <note>catalytic</note>
    </ligand>
</feature>
<feature type="binding site" evidence="1">
    <location>
        <position position="217"/>
    </location>
    <ligand>
        <name>Mg(2+)</name>
        <dbReference type="ChEBI" id="CHEBI:18420"/>
        <label>1</label>
        <note>catalytic</note>
    </ligand>
</feature>
<feature type="binding site" evidence="1">
    <location>
        <position position="217"/>
    </location>
    <ligand>
        <name>Mg(2+)</name>
        <dbReference type="ChEBI" id="CHEBI:18420"/>
        <label>2</label>
    </ligand>
</feature>
<feature type="binding site" evidence="1">
    <location>
        <position position="219"/>
    </location>
    <ligand>
        <name>Mg(2+)</name>
        <dbReference type="ChEBI" id="CHEBI:18420"/>
        <label>2</label>
    </ligand>
</feature>
<accession>A6VGM3</accession>
<proteinExistence type="inferred from homology"/>
<comment type="function">
    <text evidence="1">RNA polymerase that catalyzes the synthesis of short RNA molecules used as primers for DNA polymerase during DNA replication.</text>
</comment>
<comment type="catalytic activity">
    <reaction evidence="1">
        <text>ssDNA + n NTP = ssDNA/pppN(pN)n-1 hybrid + (n-1) diphosphate.</text>
        <dbReference type="EC" id="2.7.7.101"/>
    </reaction>
</comment>
<comment type="cofactor">
    <cofactor evidence="1">
        <name>Mg(2+)</name>
        <dbReference type="ChEBI" id="CHEBI:18420"/>
    </cofactor>
    <text evidence="1">Binds two Mg(2+) per subunit.</text>
</comment>
<comment type="subunit">
    <text evidence="1">Forms a ternary complex with MCM helicase and DNA.</text>
</comment>
<comment type="similarity">
    <text evidence="1">Belongs to the archaeal DnaG primase family.</text>
</comment>
<gene>
    <name evidence="1" type="primary">dnaG</name>
    <name type="ordered locus">MmarC7_0531</name>
</gene>
<keyword id="KW-0235">DNA replication</keyword>
<keyword id="KW-0240">DNA-directed RNA polymerase</keyword>
<keyword id="KW-0460">Magnesium</keyword>
<keyword id="KW-0479">Metal-binding</keyword>
<keyword id="KW-0548">Nucleotidyltransferase</keyword>
<keyword id="KW-0639">Primosome</keyword>
<keyword id="KW-0804">Transcription</keyword>
<keyword id="KW-0808">Transferase</keyword>
<protein>
    <recommendedName>
        <fullName evidence="1">DNA primase DnaG</fullName>
        <ecNumber evidence="1">2.7.7.101</ecNumber>
    </recommendedName>
</protein>
<reference key="1">
    <citation type="submission" date="2007-06" db="EMBL/GenBank/DDBJ databases">
        <title>Complete sequence of Methanococcus maripaludis C7.</title>
        <authorList>
            <consortium name="US DOE Joint Genome Institute"/>
            <person name="Copeland A."/>
            <person name="Lucas S."/>
            <person name="Lapidus A."/>
            <person name="Barry K."/>
            <person name="Glavina del Rio T."/>
            <person name="Dalin E."/>
            <person name="Tice H."/>
            <person name="Pitluck S."/>
            <person name="Clum A."/>
            <person name="Schmutz J."/>
            <person name="Larimer F."/>
            <person name="Land M."/>
            <person name="Hauser L."/>
            <person name="Kyrpides N."/>
            <person name="Anderson I."/>
            <person name="Sieprawska-Lupa M."/>
            <person name="Whitman W.B."/>
            <person name="Richardson P."/>
        </authorList>
    </citation>
    <scope>NUCLEOTIDE SEQUENCE [LARGE SCALE GENOMIC DNA]</scope>
    <source>
        <strain>C7 / ATCC BAA-1331</strain>
    </source>
</reference>
<dbReference type="EC" id="2.7.7.101" evidence="1"/>
<dbReference type="EMBL" id="CP000745">
    <property type="protein sequence ID" value="ABR65599.1"/>
    <property type="molecule type" value="Genomic_DNA"/>
</dbReference>
<dbReference type="SMR" id="A6VGM3"/>
<dbReference type="STRING" id="426368.MmarC7_0531"/>
<dbReference type="KEGG" id="mmz:MmarC7_0531"/>
<dbReference type="eggNOG" id="arCOG04281">
    <property type="taxonomic scope" value="Archaea"/>
</dbReference>
<dbReference type="HOGENOM" id="CLU_034626_0_0_2"/>
<dbReference type="OrthoDB" id="8643at2157"/>
<dbReference type="GO" id="GO:0005737">
    <property type="term" value="C:cytoplasm"/>
    <property type="evidence" value="ECO:0007669"/>
    <property type="project" value="TreeGrafter"/>
</dbReference>
<dbReference type="GO" id="GO:0000428">
    <property type="term" value="C:DNA-directed RNA polymerase complex"/>
    <property type="evidence" value="ECO:0007669"/>
    <property type="project" value="UniProtKB-KW"/>
</dbReference>
<dbReference type="GO" id="GO:0000178">
    <property type="term" value="C:exosome (RNase complex)"/>
    <property type="evidence" value="ECO:0007669"/>
    <property type="project" value="InterPro"/>
</dbReference>
<dbReference type="GO" id="GO:1990077">
    <property type="term" value="C:primosome complex"/>
    <property type="evidence" value="ECO:0007669"/>
    <property type="project" value="UniProtKB-KW"/>
</dbReference>
<dbReference type="GO" id="GO:0003899">
    <property type="term" value="F:DNA-directed RNA polymerase activity"/>
    <property type="evidence" value="ECO:0007669"/>
    <property type="project" value="InterPro"/>
</dbReference>
<dbReference type="GO" id="GO:0046872">
    <property type="term" value="F:metal ion binding"/>
    <property type="evidence" value="ECO:0007669"/>
    <property type="project" value="UniProtKB-KW"/>
</dbReference>
<dbReference type="GO" id="GO:0008143">
    <property type="term" value="F:poly(A) binding"/>
    <property type="evidence" value="ECO:0007669"/>
    <property type="project" value="InterPro"/>
</dbReference>
<dbReference type="GO" id="GO:0006269">
    <property type="term" value="P:DNA replication, synthesis of primer"/>
    <property type="evidence" value="ECO:0007669"/>
    <property type="project" value="UniProtKB-UniRule"/>
</dbReference>
<dbReference type="CDD" id="cd01029">
    <property type="entry name" value="TOPRIM_primases"/>
    <property type="match status" value="1"/>
</dbReference>
<dbReference type="FunFam" id="3.40.1360.10:FF:000010">
    <property type="entry name" value="DNA primase DnaG"/>
    <property type="match status" value="1"/>
</dbReference>
<dbReference type="Gene3D" id="3.40.1360.10">
    <property type="match status" value="1"/>
</dbReference>
<dbReference type="HAMAP" id="MF_00007">
    <property type="entry name" value="DNA_primase_DnaG_arc"/>
    <property type="match status" value="1"/>
</dbReference>
<dbReference type="InterPro" id="IPR050219">
    <property type="entry name" value="DnaG_primase"/>
</dbReference>
<dbReference type="InterPro" id="IPR020607">
    <property type="entry name" value="Primase_DnaG_arc"/>
</dbReference>
<dbReference type="InterPro" id="IPR034154">
    <property type="entry name" value="TOPRIM_DnaG/twinkle"/>
</dbReference>
<dbReference type="InterPro" id="IPR006171">
    <property type="entry name" value="TOPRIM_dom"/>
</dbReference>
<dbReference type="NCBIfam" id="NF003108">
    <property type="entry name" value="PRK04031.1-1"/>
    <property type="match status" value="1"/>
</dbReference>
<dbReference type="PANTHER" id="PTHR30313">
    <property type="entry name" value="DNA PRIMASE"/>
    <property type="match status" value="1"/>
</dbReference>
<dbReference type="PANTHER" id="PTHR30313:SF2">
    <property type="entry name" value="DNA PRIMASE"/>
    <property type="match status" value="1"/>
</dbReference>
<dbReference type="Pfam" id="PF13662">
    <property type="entry name" value="Toprim_4"/>
    <property type="match status" value="1"/>
</dbReference>
<dbReference type="SMART" id="SM00493">
    <property type="entry name" value="TOPRIM"/>
    <property type="match status" value="1"/>
</dbReference>
<dbReference type="SUPFAM" id="SSF56731">
    <property type="entry name" value="DNA primase core"/>
    <property type="match status" value="1"/>
</dbReference>
<dbReference type="PROSITE" id="PS50880">
    <property type="entry name" value="TOPRIM"/>
    <property type="match status" value="1"/>
</dbReference>